<accession>P0DE73</accession>
<accession>P66422</accession>
<accession>Q9A1W1</accession>
<organism>
    <name type="scientific">Streptococcus pyogenes serotype M3 (strain SSI-1)</name>
    <dbReference type="NCBI Taxonomy" id="193567"/>
    <lineage>
        <taxon>Bacteria</taxon>
        <taxon>Bacillati</taxon>
        <taxon>Bacillota</taxon>
        <taxon>Bacilli</taxon>
        <taxon>Lactobacillales</taxon>
        <taxon>Streptococcaceae</taxon>
        <taxon>Streptococcus</taxon>
    </lineage>
</organism>
<proteinExistence type="inferred from homology"/>
<comment type="function">
    <text evidence="1">Binds 16S rRNA, required for the assembly of 30S particles and may also be responsible for determining the conformation of the 16S rRNA at the A site.</text>
</comment>
<comment type="cofactor">
    <cofactor evidence="1">
        <name>Zn(2+)</name>
        <dbReference type="ChEBI" id="CHEBI:29105"/>
    </cofactor>
    <text evidence="1">Binds 1 zinc ion per subunit.</text>
</comment>
<comment type="subunit">
    <text evidence="1">Part of the 30S ribosomal subunit. Contacts proteins S3 and S10.</text>
</comment>
<comment type="similarity">
    <text evidence="1">Belongs to the universal ribosomal protein uS14 family. Zinc-binding uS14 subfamily.</text>
</comment>
<dbReference type="EMBL" id="BA000034">
    <property type="protein sequence ID" value="BAC63150.1"/>
    <property type="molecule type" value="Genomic_DNA"/>
</dbReference>
<dbReference type="RefSeq" id="WP_002987746.1">
    <property type="nucleotide sequence ID" value="NC_004606.1"/>
</dbReference>
<dbReference type="SMR" id="P0DE73"/>
<dbReference type="KEGG" id="sps:SPs0055"/>
<dbReference type="HOGENOM" id="CLU_139869_3_0_9"/>
<dbReference type="GO" id="GO:0015935">
    <property type="term" value="C:small ribosomal subunit"/>
    <property type="evidence" value="ECO:0007669"/>
    <property type="project" value="TreeGrafter"/>
</dbReference>
<dbReference type="GO" id="GO:0019843">
    <property type="term" value="F:rRNA binding"/>
    <property type="evidence" value="ECO:0007669"/>
    <property type="project" value="UniProtKB-UniRule"/>
</dbReference>
<dbReference type="GO" id="GO:0003735">
    <property type="term" value="F:structural constituent of ribosome"/>
    <property type="evidence" value="ECO:0007669"/>
    <property type="project" value="InterPro"/>
</dbReference>
<dbReference type="GO" id="GO:0008270">
    <property type="term" value="F:zinc ion binding"/>
    <property type="evidence" value="ECO:0007669"/>
    <property type="project" value="UniProtKB-UniRule"/>
</dbReference>
<dbReference type="GO" id="GO:0006412">
    <property type="term" value="P:translation"/>
    <property type="evidence" value="ECO:0007669"/>
    <property type="project" value="UniProtKB-UniRule"/>
</dbReference>
<dbReference type="FunFam" id="4.10.830.10:FF:000001">
    <property type="entry name" value="30S ribosomal protein S14 type Z"/>
    <property type="match status" value="1"/>
</dbReference>
<dbReference type="Gene3D" id="4.10.830.10">
    <property type="entry name" value="30s Ribosomal Protein S14, Chain N"/>
    <property type="match status" value="1"/>
</dbReference>
<dbReference type="HAMAP" id="MF_01364_B">
    <property type="entry name" value="Ribosomal_uS14_2_B"/>
    <property type="match status" value="1"/>
</dbReference>
<dbReference type="InterPro" id="IPR001209">
    <property type="entry name" value="Ribosomal_uS14"/>
</dbReference>
<dbReference type="InterPro" id="IPR023053">
    <property type="entry name" value="Ribosomal_uS14_bact"/>
</dbReference>
<dbReference type="InterPro" id="IPR018271">
    <property type="entry name" value="Ribosomal_uS14_CS"/>
</dbReference>
<dbReference type="InterPro" id="IPR043140">
    <property type="entry name" value="Ribosomal_uS14_sf"/>
</dbReference>
<dbReference type="NCBIfam" id="NF005974">
    <property type="entry name" value="PRK08061.1"/>
    <property type="match status" value="1"/>
</dbReference>
<dbReference type="PANTHER" id="PTHR19836">
    <property type="entry name" value="30S RIBOSOMAL PROTEIN S14"/>
    <property type="match status" value="1"/>
</dbReference>
<dbReference type="PANTHER" id="PTHR19836:SF26">
    <property type="entry name" value="SMALL RIBOSOMAL SUBUNIT PROTEIN US14B"/>
    <property type="match status" value="1"/>
</dbReference>
<dbReference type="Pfam" id="PF00253">
    <property type="entry name" value="Ribosomal_S14"/>
    <property type="match status" value="1"/>
</dbReference>
<dbReference type="SUPFAM" id="SSF57716">
    <property type="entry name" value="Glucocorticoid receptor-like (DNA-binding domain)"/>
    <property type="match status" value="1"/>
</dbReference>
<dbReference type="PROSITE" id="PS00527">
    <property type="entry name" value="RIBOSOMAL_S14"/>
    <property type="match status" value="1"/>
</dbReference>
<sequence>MAKKSMIAKNKRPAKHSTQAYTRCEKCGRPHSVYRKFKLCRVCFRELAYKGQIPGVVKASW</sequence>
<name>RS14Z_STRPQ</name>
<gene>
    <name evidence="1" type="primary">rpsZ</name>
    <name evidence="1" type="synonym">rpsN.1</name>
    <name evidence="1" type="synonym">rpsN1</name>
    <name type="ordered locus">SPs0055</name>
</gene>
<reference key="1">
    <citation type="journal article" date="2003" name="Genome Res.">
        <title>Genome sequence of an M3 strain of Streptococcus pyogenes reveals a large-scale genomic rearrangement in invasive strains and new insights into phage evolution.</title>
        <authorList>
            <person name="Nakagawa I."/>
            <person name="Kurokawa K."/>
            <person name="Yamashita A."/>
            <person name="Nakata M."/>
            <person name="Tomiyasu Y."/>
            <person name="Okahashi N."/>
            <person name="Kawabata S."/>
            <person name="Yamazaki K."/>
            <person name="Shiba T."/>
            <person name="Yasunaga T."/>
            <person name="Hayashi H."/>
            <person name="Hattori M."/>
            <person name="Hamada S."/>
        </authorList>
    </citation>
    <scope>NUCLEOTIDE SEQUENCE [LARGE SCALE GENOMIC DNA]</scope>
    <source>
        <strain>SSI-1</strain>
    </source>
</reference>
<keyword id="KW-0479">Metal-binding</keyword>
<keyword id="KW-0687">Ribonucleoprotein</keyword>
<keyword id="KW-0689">Ribosomal protein</keyword>
<keyword id="KW-0694">RNA-binding</keyword>
<keyword id="KW-0699">rRNA-binding</keyword>
<keyword id="KW-0862">Zinc</keyword>
<evidence type="ECO:0000255" key="1">
    <source>
        <dbReference type="HAMAP-Rule" id="MF_01364"/>
    </source>
</evidence>
<evidence type="ECO:0000305" key="2"/>
<protein>
    <recommendedName>
        <fullName evidence="1">Small ribosomal subunit protein uS14B</fullName>
    </recommendedName>
    <alternativeName>
        <fullName evidence="2">30S ribosomal protein S14 type Z</fullName>
    </alternativeName>
</protein>
<feature type="chain" id="PRO_0000411526" description="Small ribosomal subunit protein uS14B">
    <location>
        <begin position="1"/>
        <end position="61"/>
    </location>
</feature>
<feature type="binding site" evidence="1">
    <location>
        <position position="24"/>
    </location>
    <ligand>
        <name>Zn(2+)</name>
        <dbReference type="ChEBI" id="CHEBI:29105"/>
    </ligand>
</feature>
<feature type="binding site" evidence="1">
    <location>
        <position position="27"/>
    </location>
    <ligand>
        <name>Zn(2+)</name>
        <dbReference type="ChEBI" id="CHEBI:29105"/>
    </ligand>
</feature>
<feature type="binding site" evidence="1">
    <location>
        <position position="40"/>
    </location>
    <ligand>
        <name>Zn(2+)</name>
        <dbReference type="ChEBI" id="CHEBI:29105"/>
    </ligand>
</feature>
<feature type="binding site" evidence="1">
    <location>
        <position position="43"/>
    </location>
    <ligand>
        <name>Zn(2+)</name>
        <dbReference type="ChEBI" id="CHEBI:29105"/>
    </ligand>
</feature>